<reference key="1">
    <citation type="submission" date="2005-06" db="EMBL/GenBank/DDBJ databases">
        <title>Overexpression of Dasypus novemcinctus TNF-alpha in E. coli.</title>
        <authorList>
            <person name="Adams J.E."/>
        </authorList>
    </citation>
    <scope>NUCLEOTIDE SEQUENCE [MRNA]</scope>
</reference>
<gene>
    <name type="primary">TNF</name>
    <name type="synonym">TNFA</name>
    <name type="synonym">TNFSF2</name>
</gene>
<proteinExistence type="evidence at transcript level"/>
<accession>Q1WM27</accession>
<sequence>MSTESMIRDVELAEEALPKKVGPQGSRRCWCLSLFSFLLVAGATALFCLLQFGVIGPQRDEQLPSGFHLNSPLAQTLRSSSRAPSDKPVAHVVADPEAEGRLRWLSRRTNTLLAYGAALTDNQLVVPADGLYLVYSQLLFTGQGCAPAQPLLTHTVSRFAASYQTKVNLLSAIKSPCPRETPEGAEAKPWYEPIYLGGVFQLDKGDRFSAETNLPAYLDFAEPGQVYFGLIAL</sequence>
<protein>
    <recommendedName>
        <fullName>Tumor necrosis factor</fullName>
    </recommendedName>
    <alternativeName>
        <fullName>Cachectin</fullName>
    </alternativeName>
    <alternativeName>
        <fullName>TNF-alpha</fullName>
    </alternativeName>
    <alternativeName>
        <fullName>Tumor necrosis factor ligand superfamily member 2</fullName>
        <shortName>TNF-a</shortName>
    </alternativeName>
    <component>
        <recommendedName>
            <fullName>Tumor necrosis factor, membrane form</fullName>
        </recommendedName>
        <alternativeName>
            <fullName>N-terminal fragment</fullName>
            <shortName>NTF</shortName>
        </alternativeName>
    </component>
    <component>
        <recommendedName>
            <fullName>Intracellular domain 1</fullName>
            <shortName>ICD1</shortName>
        </recommendedName>
    </component>
    <component>
        <recommendedName>
            <fullName>Intracellular domain 2</fullName>
            <shortName>ICD2</shortName>
        </recommendedName>
    </component>
    <component>
        <recommendedName>
            <fullName>C-domain 1</fullName>
        </recommendedName>
    </component>
    <component>
        <recommendedName>
            <fullName>C-domain 2</fullName>
        </recommendedName>
    </component>
    <component>
        <recommendedName>
            <fullName>Tumor necrosis factor, soluble form</fullName>
        </recommendedName>
    </component>
</protein>
<organism>
    <name type="scientific">Dasypus novemcinctus</name>
    <name type="common">Nine-banded armadillo</name>
    <dbReference type="NCBI Taxonomy" id="9361"/>
    <lineage>
        <taxon>Eukaryota</taxon>
        <taxon>Metazoa</taxon>
        <taxon>Chordata</taxon>
        <taxon>Craniata</taxon>
        <taxon>Vertebrata</taxon>
        <taxon>Euteleostomi</taxon>
        <taxon>Mammalia</taxon>
        <taxon>Eutheria</taxon>
        <taxon>Xenarthra</taxon>
        <taxon>Cingulata</taxon>
        <taxon>Dasypodidae</taxon>
        <taxon>Dasypus</taxon>
    </lineage>
</organism>
<comment type="function">
    <text evidence="2 3">Cytokine that binds to TNFRSF1A/TNFR1 and TNFRSF1B/TNFBR. It is mainly secreted by macrophages and can induce cell death of certain tumor cell lines. It is potent pyrogen causing fever by direct action or by stimulation of interleukin-1 secretion and is implicated in the induction of cachexia, Under certain conditions it can stimulate cell proliferation and induce cell differentiation (By similarity). Induces insulin resistance in adipocytes via inhibition of insulin-induced IRS1 tyrosine phosphorylation and insulin-induced glucose uptake. Induces GKAP42 protein degradation in adipocytes which is partially responsible for TNF-induced insulin resistance (By similarity). Plays a role in angiogenesis by inducing VEGF production synergistically with IL1B and IL6 (By similarity). Promotes osteoclastogenesis and therefore mediates bone resorption (By similarity).</text>
</comment>
<comment type="function">
    <text evidence="2">The TNF intracellular domain (ICD) form induces IL12 production in dendritic cells.</text>
</comment>
<comment type="subunit">
    <text evidence="1">Homotrimer. Interacts with SPPL2B (By similarity).</text>
</comment>
<comment type="subcellular location">
    <subcellularLocation>
        <location evidence="1">Cell membrane</location>
        <topology evidence="1">Single-pass type II membrane protein</topology>
    </subcellularLocation>
</comment>
<comment type="subcellular location">
    <molecule>Tumor necrosis factor, membrane form</molecule>
    <subcellularLocation>
        <location evidence="1">Membrane</location>
        <topology evidence="1">Single-pass type II membrane protein</topology>
    </subcellularLocation>
</comment>
<comment type="subcellular location">
    <molecule>Tumor necrosis factor, soluble form</molecule>
    <subcellularLocation>
        <location evidence="1">Secreted</location>
    </subcellularLocation>
</comment>
<comment type="subcellular location">
    <molecule>C-domain 1</molecule>
    <subcellularLocation>
        <location evidence="1">Secreted</location>
    </subcellularLocation>
</comment>
<comment type="subcellular location">
    <molecule>C-domain 2</molecule>
    <subcellularLocation>
        <location evidence="1">Secreted</location>
    </subcellularLocation>
</comment>
<comment type="PTM">
    <text evidence="1">The soluble form derives from the membrane form by proteolytic processing. The membrane-bound form is further proteolytically processed by SPPL2A or SPPL2B through regulated intramembrane proteolysis producing TNF intracellular domains (ICD1 and ICD2) released in the cytosol and TNF C-domain 1 and C-domain 2 secreted into the extracellular space (By similarity).</text>
</comment>
<comment type="PTM">
    <text evidence="1">The membrane form, but not the soluble form, is phosphorylated on serine residues. Dephosphorylation of the membrane form occurs by binding to soluble TNFRSF1A/TNFR1 (By similarity).</text>
</comment>
<comment type="PTM">
    <text evidence="1">O-glycosylated; glycans contain galactose, N-acetylgalactosamine and N-acetylneuraminic acid.</text>
</comment>
<comment type="PTM">
    <molecule>Tumor necrosis factor, soluble form</molecule>
    <text evidence="2">The soluble form is demyristoylated by SIRT6, promoting its secretion.</text>
</comment>
<comment type="similarity">
    <text evidence="6">Belongs to the tumor necrosis factor family.</text>
</comment>
<feature type="chain" id="PRO_0000253753" description="Tumor necrosis factor, membrane form">
    <location>
        <begin position="1"/>
        <end position="233"/>
    </location>
</feature>
<feature type="chain" id="PRO_0000417215" description="Intracellular domain 1" evidence="1">
    <location>
        <begin position="1"/>
        <end position="38"/>
    </location>
</feature>
<feature type="chain" id="PRO_0000417216" description="Intracellular domain 2" evidence="1">
    <location>
        <begin position="1"/>
        <end position="34"/>
    </location>
</feature>
<feature type="chain" id="PRO_0000417217" description="C-domain 1" evidence="1">
    <location>
        <begin position="49"/>
        <end status="unknown"/>
    </location>
</feature>
<feature type="chain" id="PRO_0000417218" description="C-domain 2" evidence="1">
    <location>
        <begin position="51"/>
        <end status="unknown"/>
    </location>
</feature>
<feature type="chain" id="PRO_0000253754" description="Tumor necrosis factor, soluble form" evidence="1">
    <location>
        <begin position="78"/>
        <end position="233"/>
    </location>
</feature>
<feature type="topological domain" description="Cytoplasmic" evidence="4">
    <location>
        <begin position="1"/>
        <end position="34"/>
    </location>
</feature>
<feature type="transmembrane region" description="Helical; Signal-anchor for type II membrane protein" evidence="4">
    <location>
        <begin position="35"/>
        <end position="55"/>
    </location>
</feature>
<feature type="topological domain" description="Extracellular" evidence="4">
    <location>
        <begin position="56"/>
        <end position="233"/>
    </location>
</feature>
<feature type="domain" description="THD" evidence="5">
    <location>
        <begin position="88"/>
        <end position="233"/>
    </location>
</feature>
<feature type="site" description="Cleavage; by SPPL2A or SPPL2B" evidence="1">
    <location>
        <begin position="33"/>
        <end position="34"/>
    </location>
</feature>
<feature type="site" description="Cleavage; by SPPL2A or SPPL2B" evidence="1">
    <location>
        <begin position="38"/>
        <end position="39"/>
    </location>
</feature>
<feature type="site" description="Cleavage; by SPPL2A or SPPL2B" evidence="1">
    <location>
        <begin position="48"/>
        <end position="49"/>
    </location>
</feature>
<feature type="site" description="Cleavage; by SPPL2A or SPPL2B" evidence="1">
    <location>
        <begin position="50"/>
        <end position="51"/>
    </location>
</feature>
<feature type="site" description="Cleavage; by ADAM17" evidence="1">
    <location>
        <begin position="77"/>
        <end position="78"/>
    </location>
</feature>
<feature type="modified residue" description="Phosphoserine; by CK1" evidence="1">
    <location>
        <position position="2"/>
    </location>
</feature>
<feature type="lipid moiety-binding region" description="N6-myristoyl lysine" evidence="2">
    <location>
        <position position="19"/>
    </location>
</feature>
<feature type="lipid moiety-binding region" description="N6-myristoyl lysine" evidence="2">
    <location>
        <position position="20"/>
    </location>
</feature>
<feature type="glycosylation site" description="O-linked (GalNAc...) serine; in soluble form" evidence="1">
    <location>
        <position position="80"/>
    </location>
</feature>
<feature type="disulfide bond" evidence="5">
    <location>
        <begin position="145"/>
        <end position="177"/>
    </location>
</feature>
<keyword id="KW-1003">Cell membrane</keyword>
<keyword id="KW-0202">Cytokine</keyword>
<keyword id="KW-1015">Disulfide bond</keyword>
<keyword id="KW-0325">Glycoprotein</keyword>
<keyword id="KW-0449">Lipoprotein</keyword>
<keyword id="KW-0472">Membrane</keyword>
<keyword id="KW-0519">Myristate</keyword>
<keyword id="KW-0597">Phosphoprotein</keyword>
<keyword id="KW-0964">Secreted</keyword>
<keyword id="KW-0735">Signal-anchor</keyword>
<keyword id="KW-0812">Transmembrane</keyword>
<keyword id="KW-1133">Transmembrane helix</keyword>
<name>TNFA_DASNO</name>
<evidence type="ECO:0000250" key="1"/>
<evidence type="ECO:0000250" key="2">
    <source>
        <dbReference type="UniProtKB" id="P01375"/>
    </source>
</evidence>
<evidence type="ECO:0000250" key="3">
    <source>
        <dbReference type="UniProtKB" id="P06804"/>
    </source>
</evidence>
<evidence type="ECO:0000255" key="4"/>
<evidence type="ECO:0000255" key="5">
    <source>
        <dbReference type="PROSITE-ProRule" id="PRU01387"/>
    </source>
</evidence>
<evidence type="ECO:0000305" key="6"/>
<dbReference type="EMBL" id="DQ096649">
    <property type="protein sequence ID" value="AAZ76592.1"/>
    <property type="molecule type" value="mRNA"/>
</dbReference>
<dbReference type="RefSeq" id="NP_001268245.1">
    <property type="nucleotide sequence ID" value="NM_001281316.1"/>
</dbReference>
<dbReference type="SMR" id="Q1WM27"/>
<dbReference type="GlyCosmos" id="Q1WM27">
    <property type="glycosylation" value="1 site, No reported glycans"/>
</dbReference>
<dbReference type="GeneID" id="101420445"/>
<dbReference type="KEGG" id="dnm:101420445"/>
<dbReference type="CTD" id="7124"/>
<dbReference type="OrthoDB" id="9940698at2759"/>
<dbReference type="GO" id="GO:0009986">
    <property type="term" value="C:cell surface"/>
    <property type="evidence" value="ECO:0007669"/>
    <property type="project" value="TreeGrafter"/>
</dbReference>
<dbReference type="GO" id="GO:0005615">
    <property type="term" value="C:extracellular space"/>
    <property type="evidence" value="ECO:0007669"/>
    <property type="project" value="UniProtKB-KW"/>
</dbReference>
<dbReference type="GO" id="GO:0005886">
    <property type="term" value="C:plasma membrane"/>
    <property type="evidence" value="ECO:0007669"/>
    <property type="project" value="UniProtKB-SubCell"/>
</dbReference>
<dbReference type="GO" id="GO:0005125">
    <property type="term" value="F:cytokine activity"/>
    <property type="evidence" value="ECO:0007669"/>
    <property type="project" value="UniProtKB-KW"/>
</dbReference>
<dbReference type="GO" id="GO:0005164">
    <property type="term" value="F:tumor necrosis factor receptor binding"/>
    <property type="evidence" value="ECO:0007669"/>
    <property type="project" value="InterPro"/>
</dbReference>
<dbReference type="GO" id="GO:0008625">
    <property type="term" value="P:extrinsic apoptotic signaling pathway via death domain receptors"/>
    <property type="evidence" value="ECO:0007669"/>
    <property type="project" value="TreeGrafter"/>
</dbReference>
<dbReference type="GO" id="GO:0006955">
    <property type="term" value="P:immune response"/>
    <property type="evidence" value="ECO:0007669"/>
    <property type="project" value="InterPro"/>
</dbReference>
<dbReference type="GO" id="GO:0097527">
    <property type="term" value="P:necroptotic signaling pathway"/>
    <property type="evidence" value="ECO:0000250"/>
    <property type="project" value="CAFA"/>
</dbReference>
<dbReference type="GO" id="GO:0043242">
    <property type="term" value="P:negative regulation of protein-containing complex disassembly"/>
    <property type="evidence" value="ECO:0000250"/>
    <property type="project" value="UniProtKB"/>
</dbReference>
<dbReference type="GO" id="GO:0043065">
    <property type="term" value="P:positive regulation of apoptotic process"/>
    <property type="evidence" value="ECO:0000250"/>
    <property type="project" value="UniProtKB"/>
</dbReference>
<dbReference type="GO" id="GO:0043123">
    <property type="term" value="P:positive regulation of canonical NF-kappaB signal transduction"/>
    <property type="evidence" value="ECO:0007669"/>
    <property type="project" value="TreeGrafter"/>
</dbReference>
<dbReference type="GO" id="GO:2001238">
    <property type="term" value="P:positive regulation of extrinsic apoptotic signaling pathway"/>
    <property type="evidence" value="ECO:0007669"/>
    <property type="project" value="TreeGrafter"/>
</dbReference>
<dbReference type="GO" id="GO:0043507">
    <property type="term" value="P:positive regulation of JUN kinase activity"/>
    <property type="evidence" value="ECO:0000250"/>
    <property type="project" value="UniProtKB"/>
</dbReference>
<dbReference type="GO" id="GO:0043406">
    <property type="term" value="P:positive regulation of MAP kinase activity"/>
    <property type="evidence" value="ECO:0000250"/>
    <property type="project" value="UniProtKB"/>
</dbReference>
<dbReference type="GO" id="GO:0051092">
    <property type="term" value="P:positive regulation of NF-kappaB transcription factor activity"/>
    <property type="evidence" value="ECO:0000250"/>
    <property type="project" value="UniProtKB"/>
</dbReference>
<dbReference type="GO" id="GO:0001934">
    <property type="term" value="P:positive regulation of protein phosphorylation"/>
    <property type="evidence" value="ECO:0000250"/>
    <property type="project" value="UniProtKB"/>
</dbReference>
<dbReference type="GO" id="GO:0043243">
    <property type="term" value="P:positive regulation of protein-containing complex disassembly"/>
    <property type="evidence" value="ECO:0000250"/>
    <property type="project" value="UniProtKB"/>
</dbReference>
<dbReference type="GO" id="GO:0045944">
    <property type="term" value="P:positive regulation of transcription by RNA polymerase II"/>
    <property type="evidence" value="ECO:0007669"/>
    <property type="project" value="TreeGrafter"/>
</dbReference>
<dbReference type="GO" id="GO:0065008">
    <property type="term" value="P:regulation of biological quality"/>
    <property type="evidence" value="ECO:0007669"/>
    <property type="project" value="UniProtKB-ARBA"/>
</dbReference>
<dbReference type="GO" id="GO:0050793">
    <property type="term" value="P:regulation of developmental process"/>
    <property type="evidence" value="ECO:0007669"/>
    <property type="project" value="UniProtKB-ARBA"/>
</dbReference>
<dbReference type="GO" id="GO:0051239">
    <property type="term" value="P:regulation of multicellular organismal process"/>
    <property type="evidence" value="ECO:0007669"/>
    <property type="project" value="UniProtKB-ARBA"/>
</dbReference>
<dbReference type="GO" id="GO:0051046">
    <property type="term" value="P:regulation of secretion"/>
    <property type="evidence" value="ECO:0007669"/>
    <property type="project" value="UniProtKB-ARBA"/>
</dbReference>
<dbReference type="GO" id="GO:0033209">
    <property type="term" value="P:tumor necrosis factor-mediated signaling pathway"/>
    <property type="evidence" value="ECO:0007669"/>
    <property type="project" value="TreeGrafter"/>
</dbReference>
<dbReference type="GO" id="GO:0010573">
    <property type="term" value="P:vascular endothelial growth factor production"/>
    <property type="evidence" value="ECO:0000250"/>
    <property type="project" value="UniProtKB"/>
</dbReference>
<dbReference type="CDD" id="cd00184">
    <property type="entry name" value="TNF"/>
    <property type="match status" value="1"/>
</dbReference>
<dbReference type="FunFam" id="2.60.120.40:FF:000007">
    <property type="entry name" value="Tumor necrosis factor"/>
    <property type="match status" value="1"/>
</dbReference>
<dbReference type="Gene3D" id="2.60.120.40">
    <property type="match status" value="1"/>
</dbReference>
<dbReference type="InterPro" id="IPR006053">
    <property type="entry name" value="TNF"/>
</dbReference>
<dbReference type="InterPro" id="IPR002959">
    <property type="entry name" value="TNF_alpha"/>
</dbReference>
<dbReference type="InterPro" id="IPR021184">
    <property type="entry name" value="TNF_CS"/>
</dbReference>
<dbReference type="InterPro" id="IPR006052">
    <property type="entry name" value="TNF_dom"/>
</dbReference>
<dbReference type="InterPro" id="IPR008983">
    <property type="entry name" value="Tumour_necrosis_fac-like_dom"/>
</dbReference>
<dbReference type="PANTHER" id="PTHR11471:SF23">
    <property type="entry name" value="TUMOR NECROSIS FACTOR"/>
    <property type="match status" value="1"/>
</dbReference>
<dbReference type="PANTHER" id="PTHR11471">
    <property type="entry name" value="TUMOR NECROSIS FACTOR FAMILY MEMBER"/>
    <property type="match status" value="1"/>
</dbReference>
<dbReference type="Pfam" id="PF00229">
    <property type="entry name" value="TNF"/>
    <property type="match status" value="1"/>
</dbReference>
<dbReference type="PRINTS" id="PR01234">
    <property type="entry name" value="TNECROSISFCT"/>
</dbReference>
<dbReference type="PRINTS" id="PR01235">
    <property type="entry name" value="TNFALPHA"/>
</dbReference>
<dbReference type="SMART" id="SM00207">
    <property type="entry name" value="TNF"/>
    <property type="match status" value="1"/>
</dbReference>
<dbReference type="SUPFAM" id="SSF49842">
    <property type="entry name" value="TNF-like"/>
    <property type="match status" value="1"/>
</dbReference>
<dbReference type="PROSITE" id="PS00251">
    <property type="entry name" value="THD_1"/>
    <property type="match status" value="1"/>
</dbReference>
<dbReference type="PROSITE" id="PS50049">
    <property type="entry name" value="THD_2"/>
    <property type="match status" value="1"/>
</dbReference>